<name>ACCA_ECOBW</name>
<gene>
    <name evidence="1" type="primary">accA</name>
    <name type="ordered locus">BWG_0177</name>
</gene>
<protein>
    <recommendedName>
        <fullName evidence="1">Acetyl-coenzyme A carboxylase carboxyl transferase subunit alpha</fullName>
        <shortName evidence="1">ACCase subunit alpha</shortName>
        <shortName evidence="1">Acetyl-CoA carboxylase carboxyltransferase subunit alpha</shortName>
        <ecNumber evidence="1">2.1.3.15</ecNumber>
    </recommendedName>
</protein>
<evidence type="ECO:0000255" key="1">
    <source>
        <dbReference type="HAMAP-Rule" id="MF_00823"/>
    </source>
</evidence>
<evidence type="ECO:0000255" key="2">
    <source>
        <dbReference type="PROSITE-ProRule" id="PRU01137"/>
    </source>
</evidence>
<comment type="function">
    <text evidence="1">Component of the acetyl coenzyme A carboxylase (ACC) complex. First, biotin carboxylase catalyzes the carboxylation of biotin on its carrier protein (BCCP) and then the CO(2) group is transferred by the carboxyltransferase to acetyl-CoA to form malonyl-CoA.</text>
</comment>
<comment type="catalytic activity">
    <reaction evidence="1">
        <text>N(6)-carboxybiotinyl-L-lysyl-[protein] + acetyl-CoA = N(6)-biotinyl-L-lysyl-[protein] + malonyl-CoA</text>
        <dbReference type="Rhea" id="RHEA:54728"/>
        <dbReference type="Rhea" id="RHEA-COMP:10505"/>
        <dbReference type="Rhea" id="RHEA-COMP:10506"/>
        <dbReference type="ChEBI" id="CHEBI:57288"/>
        <dbReference type="ChEBI" id="CHEBI:57384"/>
        <dbReference type="ChEBI" id="CHEBI:83144"/>
        <dbReference type="ChEBI" id="CHEBI:83145"/>
        <dbReference type="EC" id="2.1.3.15"/>
    </reaction>
</comment>
<comment type="pathway">
    <text evidence="1">Lipid metabolism; malonyl-CoA biosynthesis; malonyl-CoA from acetyl-CoA: step 1/1.</text>
</comment>
<comment type="subunit">
    <text evidence="1">Acetyl-CoA carboxylase is a heterohexamer composed of biotin carboxyl carrier protein (AccB), biotin carboxylase (AccC) and two subunits each of ACCase subunit alpha (AccA) and ACCase subunit beta (AccD).</text>
</comment>
<comment type="subcellular location">
    <subcellularLocation>
        <location evidence="1">Cytoplasm</location>
    </subcellularLocation>
</comment>
<comment type="similarity">
    <text evidence="1">Belongs to the AccA family.</text>
</comment>
<reference key="1">
    <citation type="journal article" date="2009" name="J. Bacteriol.">
        <title>Genomic sequencing reveals regulatory mutations and recombinational events in the widely used MC4100 lineage of Escherichia coli K-12.</title>
        <authorList>
            <person name="Ferenci T."/>
            <person name="Zhou Z."/>
            <person name="Betteridge T."/>
            <person name="Ren Y."/>
            <person name="Liu Y."/>
            <person name="Feng L."/>
            <person name="Reeves P.R."/>
            <person name="Wang L."/>
        </authorList>
    </citation>
    <scope>NUCLEOTIDE SEQUENCE [LARGE SCALE GENOMIC DNA]</scope>
    <source>
        <strain>K12 / MC4100 / BW2952</strain>
    </source>
</reference>
<feature type="chain" id="PRO_1000213124" description="Acetyl-coenzyme A carboxylase carboxyl transferase subunit alpha">
    <location>
        <begin position="1"/>
        <end position="319"/>
    </location>
</feature>
<feature type="domain" description="CoA carboxyltransferase C-terminal" evidence="2">
    <location>
        <begin position="35"/>
        <end position="296"/>
    </location>
</feature>
<dbReference type="EC" id="2.1.3.15" evidence="1"/>
<dbReference type="EMBL" id="CP001396">
    <property type="protein sequence ID" value="ACR61910.1"/>
    <property type="molecule type" value="Genomic_DNA"/>
</dbReference>
<dbReference type="RefSeq" id="WP_000055741.1">
    <property type="nucleotide sequence ID" value="NC_012759.1"/>
</dbReference>
<dbReference type="SMR" id="C4ZRS7"/>
<dbReference type="GeneID" id="86945115"/>
<dbReference type="KEGG" id="ebw:BWG_0177"/>
<dbReference type="HOGENOM" id="CLU_015486_0_2_6"/>
<dbReference type="UniPathway" id="UPA00655">
    <property type="reaction ID" value="UER00711"/>
</dbReference>
<dbReference type="GO" id="GO:0009317">
    <property type="term" value="C:acetyl-CoA carboxylase complex"/>
    <property type="evidence" value="ECO:0007669"/>
    <property type="project" value="InterPro"/>
</dbReference>
<dbReference type="GO" id="GO:0003989">
    <property type="term" value="F:acetyl-CoA carboxylase activity"/>
    <property type="evidence" value="ECO:0007669"/>
    <property type="project" value="InterPro"/>
</dbReference>
<dbReference type="GO" id="GO:0005524">
    <property type="term" value="F:ATP binding"/>
    <property type="evidence" value="ECO:0007669"/>
    <property type="project" value="UniProtKB-KW"/>
</dbReference>
<dbReference type="GO" id="GO:0016743">
    <property type="term" value="F:carboxyl- or carbamoyltransferase activity"/>
    <property type="evidence" value="ECO:0007669"/>
    <property type="project" value="UniProtKB-UniRule"/>
</dbReference>
<dbReference type="GO" id="GO:0006633">
    <property type="term" value="P:fatty acid biosynthetic process"/>
    <property type="evidence" value="ECO:0007669"/>
    <property type="project" value="UniProtKB-KW"/>
</dbReference>
<dbReference type="GO" id="GO:2001295">
    <property type="term" value="P:malonyl-CoA biosynthetic process"/>
    <property type="evidence" value="ECO:0007669"/>
    <property type="project" value="UniProtKB-UniRule"/>
</dbReference>
<dbReference type="FunFam" id="3.90.226.10:FF:000008">
    <property type="entry name" value="Acetyl-coenzyme A carboxylase carboxyl transferase subunit alpha"/>
    <property type="match status" value="1"/>
</dbReference>
<dbReference type="Gene3D" id="3.90.226.10">
    <property type="entry name" value="2-enoyl-CoA Hydratase, Chain A, domain 1"/>
    <property type="match status" value="1"/>
</dbReference>
<dbReference type="HAMAP" id="MF_00823">
    <property type="entry name" value="AcetylCoA_CT_alpha"/>
    <property type="match status" value="1"/>
</dbReference>
<dbReference type="InterPro" id="IPR001095">
    <property type="entry name" value="Acetyl_CoA_COase_a_su"/>
</dbReference>
<dbReference type="InterPro" id="IPR029045">
    <property type="entry name" value="ClpP/crotonase-like_dom_sf"/>
</dbReference>
<dbReference type="InterPro" id="IPR011763">
    <property type="entry name" value="COA_CT_C"/>
</dbReference>
<dbReference type="NCBIfam" id="TIGR00513">
    <property type="entry name" value="accA"/>
    <property type="match status" value="1"/>
</dbReference>
<dbReference type="NCBIfam" id="NF041504">
    <property type="entry name" value="AccA_sub"/>
    <property type="match status" value="1"/>
</dbReference>
<dbReference type="NCBIfam" id="NF004344">
    <property type="entry name" value="PRK05724.1"/>
    <property type="match status" value="1"/>
</dbReference>
<dbReference type="PANTHER" id="PTHR42853">
    <property type="entry name" value="ACETYL-COENZYME A CARBOXYLASE CARBOXYL TRANSFERASE SUBUNIT ALPHA"/>
    <property type="match status" value="1"/>
</dbReference>
<dbReference type="PANTHER" id="PTHR42853:SF3">
    <property type="entry name" value="ACETYL-COENZYME A CARBOXYLASE CARBOXYL TRANSFERASE SUBUNIT ALPHA, CHLOROPLASTIC"/>
    <property type="match status" value="1"/>
</dbReference>
<dbReference type="Pfam" id="PF03255">
    <property type="entry name" value="ACCA"/>
    <property type="match status" value="1"/>
</dbReference>
<dbReference type="PRINTS" id="PR01069">
    <property type="entry name" value="ACCCTRFRASEA"/>
</dbReference>
<dbReference type="SUPFAM" id="SSF52096">
    <property type="entry name" value="ClpP/crotonase"/>
    <property type="match status" value="1"/>
</dbReference>
<dbReference type="PROSITE" id="PS50989">
    <property type="entry name" value="COA_CT_CTER"/>
    <property type="match status" value="1"/>
</dbReference>
<sequence>MSLNFLDFEQPIAELEAKIDSLTAVSRQDEKLDINIDEEVHRLREKSVELTRKIFADLGAWQIAQLARHPQRPYTLDYVRLAFDEFDELAGDRAYADDKAIVGGIARLDGRPVMIIGHQKGRETKEKIRRNFGMPAPEGYRKALRLMQMAERFKMPIITFIDTPGAYPGVGAEERGQSEAIARNLREMSRLGVPVVCTVIGEGGSGGALAIGVGDKVNMLQYSTYSVISPEGCASILWKSADKAPLAAEAMGIIAPRLKELKLIDSIIPEPLGGAHRNPEAMAASLKAQLLADLADLDVLSTEDLKNRRYQRLMSYGYA</sequence>
<organism>
    <name type="scientific">Escherichia coli (strain K12 / MC4100 / BW2952)</name>
    <dbReference type="NCBI Taxonomy" id="595496"/>
    <lineage>
        <taxon>Bacteria</taxon>
        <taxon>Pseudomonadati</taxon>
        <taxon>Pseudomonadota</taxon>
        <taxon>Gammaproteobacteria</taxon>
        <taxon>Enterobacterales</taxon>
        <taxon>Enterobacteriaceae</taxon>
        <taxon>Escherichia</taxon>
    </lineage>
</organism>
<accession>C4ZRS7</accession>
<keyword id="KW-0067">ATP-binding</keyword>
<keyword id="KW-0963">Cytoplasm</keyword>
<keyword id="KW-0275">Fatty acid biosynthesis</keyword>
<keyword id="KW-0276">Fatty acid metabolism</keyword>
<keyword id="KW-0444">Lipid biosynthesis</keyword>
<keyword id="KW-0443">Lipid metabolism</keyword>
<keyword id="KW-0547">Nucleotide-binding</keyword>
<keyword id="KW-0808">Transferase</keyword>
<proteinExistence type="inferred from homology"/>